<protein>
    <recommendedName>
        <fullName evidence="1">Uroporphyrinogen decarboxylase</fullName>
        <shortName evidence="1">UPD</shortName>
        <shortName evidence="1">URO-D</shortName>
        <ecNumber evidence="1">4.1.1.37</ecNumber>
    </recommendedName>
</protein>
<proteinExistence type="inferred from homology"/>
<comment type="function">
    <text evidence="1">Catalyzes the decarboxylation of four acetate groups of uroporphyrinogen-III to yield coproporphyrinogen-III.</text>
</comment>
<comment type="catalytic activity">
    <reaction evidence="1">
        <text>uroporphyrinogen III + 4 H(+) = coproporphyrinogen III + 4 CO2</text>
        <dbReference type="Rhea" id="RHEA:19865"/>
        <dbReference type="ChEBI" id="CHEBI:15378"/>
        <dbReference type="ChEBI" id="CHEBI:16526"/>
        <dbReference type="ChEBI" id="CHEBI:57308"/>
        <dbReference type="ChEBI" id="CHEBI:57309"/>
        <dbReference type="EC" id="4.1.1.37"/>
    </reaction>
</comment>
<comment type="pathway">
    <text evidence="1">Porphyrin-containing compound metabolism; protoporphyrin-IX biosynthesis; coproporphyrinogen-III from 5-aminolevulinate: step 4/4.</text>
</comment>
<comment type="subunit">
    <text evidence="1">Homodimer.</text>
</comment>
<comment type="subcellular location">
    <subcellularLocation>
        <location evidence="1">Cytoplasm</location>
    </subcellularLocation>
</comment>
<comment type="similarity">
    <text evidence="1">Belongs to the uroporphyrinogen decarboxylase family.</text>
</comment>
<organism>
    <name type="scientific">Nitratiruptor sp. (strain SB155-2)</name>
    <dbReference type="NCBI Taxonomy" id="387092"/>
    <lineage>
        <taxon>Bacteria</taxon>
        <taxon>Pseudomonadati</taxon>
        <taxon>Campylobacterota</taxon>
        <taxon>Epsilonproteobacteria</taxon>
        <taxon>Nautiliales</taxon>
        <taxon>Nitratiruptoraceae</taxon>
        <taxon>Nitratiruptor</taxon>
    </lineage>
</organism>
<feature type="chain" id="PRO_1000023932" description="Uroporphyrinogen decarboxylase">
    <location>
        <begin position="1"/>
        <end position="340"/>
    </location>
</feature>
<feature type="binding site" evidence="1">
    <location>
        <begin position="21"/>
        <end position="25"/>
    </location>
    <ligand>
        <name>substrate</name>
    </ligand>
</feature>
<feature type="binding site" evidence="1">
    <location>
        <position position="71"/>
    </location>
    <ligand>
        <name>substrate</name>
    </ligand>
</feature>
<feature type="binding site" evidence="1">
    <location>
        <position position="147"/>
    </location>
    <ligand>
        <name>substrate</name>
    </ligand>
</feature>
<feature type="binding site" evidence="1">
    <location>
        <position position="202"/>
    </location>
    <ligand>
        <name>substrate</name>
    </ligand>
</feature>
<feature type="binding site" evidence="1">
    <location>
        <position position="316"/>
    </location>
    <ligand>
        <name>substrate</name>
    </ligand>
</feature>
<feature type="site" description="Transition state stabilizer" evidence="1">
    <location>
        <position position="71"/>
    </location>
</feature>
<dbReference type="EC" id="4.1.1.37" evidence="1"/>
<dbReference type="EMBL" id="AP009178">
    <property type="protein sequence ID" value="BAF69600.1"/>
    <property type="molecule type" value="Genomic_DNA"/>
</dbReference>
<dbReference type="RefSeq" id="WP_012081863.1">
    <property type="nucleotide sequence ID" value="NC_009662.1"/>
</dbReference>
<dbReference type="SMR" id="A6Q291"/>
<dbReference type="FunCoup" id="A6Q291">
    <property type="interactions" value="434"/>
</dbReference>
<dbReference type="STRING" id="387092.NIS_0486"/>
<dbReference type="KEGG" id="nis:NIS_0486"/>
<dbReference type="eggNOG" id="COG0407">
    <property type="taxonomic scope" value="Bacteria"/>
</dbReference>
<dbReference type="HOGENOM" id="CLU_040933_0_0_7"/>
<dbReference type="InParanoid" id="A6Q291"/>
<dbReference type="OrthoDB" id="9806656at2"/>
<dbReference type="UniPathway" id="UPA00251">
    <property type="reaction ID" value="UER00321"/>
</dbReference>
<dbReference type="Proteomes" id="UP000001118">
    <property type="component" value="Chromosome"/>
</dbReference>
<dbReference type="GO" id="GO:0005829">
    <property type="term" value="C:cytosol"/>
    <property type="evidence" value="ECO:0007669"/>
    <property type="project" value="TreeGrafter"/>
</dbReference>
<dbReference type="GO" id="GO:0004853">
    <property type="term" value="F:uroporphyrinogen decarboxylase activity"/>
    <property type="evidence" value="ECO:0007669"/>
    <property type="project" value="UniProtKB-UniRule"/>
</dbReference>
<dbReference type="GO" id="GO:0019353">
    <property type="term" value="P:protoporphyrinogen IX biosynthetic process from glutamate"/>
    <property type="evidence" value="ECO:0007669"/>
    <property type="project" value="TreeGrafter"/>
</dbReference>
<dbReference type="CDD" id="cd00717">
    <property type="entry name" value="URO-D"/>
    <property type="match status" value="1"/>
</dbReference>
<dbReference type="FunFam" id="3.20.20.210:FF:000007">
    <property type="entry name" value="Uroporphyrinogen decarboxylase"/>
    <property type="match status" value="1"/>
</dbReference>
<dbReference type="Gene3D" id="3.20.20.210">
    <property type="match status" value="1"/>
</dbReference>
<dbReference type="HAMAP" id="MF_00218">
    <property type="entry name" value="URO_D"/>
    <property type="match status" value="1"/>
</dbReference>
<dbReference type="InterPro" id="IPR038071">
    <property type="entry name" value="UROD/MetE-like_sf"/>
</dbReference>
<dbReference type="InterPro" id="IPR006361">
    <property type="entry name" value="Uroporphyrinogen_deCO2ase_HemE"/>
</dbReference>
<dbReference type="InterPro" id="IPR000257">
    <property type="entry name" value="Uroporphyrinogen_deCOase"/>
</dbReference>
<dbReference type="NCBIfam" id="TIGR01464">
    <property type="entry name" value="hemE"/>
    <property type="match status" value="1"/>
</dbReference>
<dbReference type="PANTHER" id="PTHR21091">
    <property type="entry name" value="METHYLTETRAHYDROFOLATE:HOMOCYSTEINE METHYLTRANSFERASE RELATED"/>
    <property type="match status" value="1"/>
</dbReference>
<dbReference type="PANTHER" id="PTHR21091:SF169">
    <property type="entry name" value="UROPORPHYRINOGEN DECARBOXYLASE"/>
    <property type="match status" value="1"/>
</dbReference>
<dbReference type="Pfam" id="PF01208">
    <property type="entry name" value="URO-D"/>
    <property type="match status" value="1"/>
</dbReference>
<dbReference type="SUPFAM" id="SSF51726">
    <property type="entry name" value="UROD/MetE-like"/>
    <property type="match status" value="1"/>
</dbReference>
<dbReference type="PROSITE" id="PS00906">
    <property type="entry name" value="UROD_1"/>
    <property type="match status" value="1"/>
</dbReference>
<dbReference type="PROSITE" id="PS00907">
    <property type="entry name" value="UROD_2"/>
    <property type="match status" value="1"/>
</dbReference>
<evidence type="ECO:0000255" key="1">
    <source>
        <dbReference type="HAMAP-Rule" id="MF_00218"/>
    </source>
</evidence>
<name>DCUP_NITSB</name>
<keyword id="KW-0963">Cytoplasm</keyword>
<keyword id="KW-0210">Decarboxylase</keyword>
<keyword id="KW-0456">Lyase</keyword>
<keyword id="KW-0627">Porphyrin biosynthesis</keyword>
<keyword id="KW-1185">Reference proteome</keyword>
<accession>A6Q291</accession>
<sequence>MVFIDACFRKKTPYTPIWMMRQAGRYLPEYMEVRNKAGDFLTLCKNPKMAAEVTLQPVEILDVDAAILFSDILVIPLEMGMDLRFEKGEGPVFSKPVRTWEDLGSLYEFPEEKLTYVYETIKIVRKKLPKDKALIGFSGAPWTLATYMVEGSGSKTYAAIKKLIYTDPEFMHALMIKITEAVKAYLVKQIESGVNAVQIFDSWASALEKEKFFEFSWDYMVDIAEFLKERYPEIPVILFPKGIAGYLDDIYGKFDVFGVDWGTPIDLAKEKLGNKYVLQGNMEPTRLYSKEATKEGVEKIVEVMGAKEGHIFNLGHGMLPDLPVENAKYLVELVHDLTRR</sequence>
<gene>
    <name evidence="1" type="primary">hemE</name>
    <name type="ordered locus">NIS_0486</name>
</gene>
<reference key="1">
    <citation type="journal article" date="2007" name="Proc. Natl. Acad. Sci. U.S.A.">
        <title>Deep-sea vent epsilon-proteobacterial genomes provide insights into emergence of pathogens.</title>
        <authorList>
            <person name="Nakagawa S."/>
            <person name="Takaki Y."/>
            <person name="Shimamura S."/>
            <person name="Reysenbach A.-L."/>
            <person name="Takai K."/>
            <person name="Horikoshi K."/>
        </authorList>
    </citation>
    <scope>NUCLEOTIDE SEQUENCE [LARGE SCALE GENOMIC DNA]</scope>
    <source>
        <strain>SB155-2</strain>
    </source>
</reference>